<organism>
    <name type="scientific">Shewanella sp. (strain MR-7)</name>
    <dbReference type="NCBI Taxonomy" id="60481"/>
    <lineage>
        <taxon>Bacteria</taxon>
        <taxon>Pseudomonadati</taxon>
        <taxon>Pseudomonadota</taxon>
        <taxon>Gammaproteobacteria</taxon>
        <taxon>Alteromonadales</taxon>
        <taxon>Shewanellaceae</taxon>
        <taxon>Shewanella</taxon>
    </lineage>
</organism>
<comment type="function">
    <text evidence="1">Prevents the cell division inhibition by proteins MinC and MinD at internal division sites while permitting inhibition at polar sites. This ensures cell division at the proper site by restricting the formation of a division septum at the midpoint of the long axis of the cell.</text>
</comment>
<comment type="similarity">
    <text evidence="1">Belongs to the MinE family.</text>
</comment>
<reference key="1">
    <citation type="submission" date="2006-08" db="EMBL/GenBank/DDBJ databases">
        <title>Complete sequence of chromosome 1 of Shewanella sp. MR-7.</title>
        <authorList>
            <person name="Copeland A."/>
            <person name="Lucas S."/>
            <person name="Lapidus A."/>
            <person name="Barry K."/>
            <person name="Detter J.C."/>
            <person name="Glavina del Rio T."/>
            <person name="Hammon N."/>
            <person name="Israni S."/>
            <person name="Dalin E."/>
            <person name="Tice H."/>
            <person name="Pitluck S."/>
            <person name="Kiss H."/>
            <person name="Brettin T."/>
            <person name="Bruce D."/>
            <person name="Han C."/>
            <person name="Tapia R."/>
            <person name="Gilna P."/>
            <person name="Schmutz J."/>
            <person name="Larimer F."/>
            <person name="Land M."/>
            <person name="Hauser L."/>
            <person name="Kyrpides N."/>
            <person name="Mikhailova N."/>
            <person name="Nealson K."/>
            <person name="Konstantinidis K."/>
            <person name="Klappenbach J."/>
            <person name="Tiedje J."/>
            <person name="Richardson P."/>
        </authorList>
    </citation>
    <scope>NUCLEOTIDE SEQUENCE [LARGE SCALE GENOMIC DNA]</scope>
    <source>
        <strain>MR-7</strain>
    </source>
</reference>
<evidence type="ECO:0000255" key="1">
    <source>
        <dbReference type="HAMAP-Rule" id="MF_00262"/>
    </source>
</evidence>
<name>MINE_SHESR</name>
<sequence length="85" mass="9871">MSLLDYFKSKKKPSTAVMAKERLQIIVAHQRGQRDTPDYFPQMKQEIIAVIRKYVHISDDQVSVQLDQNDDNLSVLELNVTLPDR</sequence>
<proteinExistence type="inferred from homology"/>
<protein>
    <recommendedName>
        <fullName evidence="1">Cell division topological specificity factor</fullName>
    </recommendedName>
</protein>
<feature type="chain" id="PRO_0000298187" description="Cell division topological specificity factor">
    <location>
        <begin position="1"/>
        <end position="85"/>
    </location>
</feature>
<dbReference type="EMBL" id="CP000444">
    <property type="protein sequence ID" value="ABI43240.1"/>
    <property type="molecule type" value="Genomic_DNA"/>
</dbReference>
<dbReference type="SMR" id="Q0HUG5"/>
<dbReference type="KEGG" id="shm:Shewmr7_2252"/>
<dbReference type="HOGENOM" id="CLU_137929_2_2_6"/>
<dbReference type="GO" id="GO:0051301">
    <property type="term" value="P:cell division"/>
    <property type="evidence" value="ECO:0007669"/>
    <property type="project" value="UniProtKB-KW"/>
</dbReference>
<dbReference type="GO" id="GO:0032955">
    <property type="term" value="P:regulation of division septum assembly"/>
    <property type="evidence" value="ECO:0007669"/>
    <property type="project" value="InterPro"/>
</dbReference>
<dbReference type="FunFam" id="3.30.1070.10:FF:000001">
    <property type="entry name" value="Cell division topological specificity factor"/>
    <property type="match status" value="1"/>
</dbReference>
<dbReference type="Gene3D" id="3.30.1070.10">
    <property type="entry name" value="Cell division topological specificity factor MinE"/>
    <property type="match status" value="1"/>
</dbReference>
<dbReference type="HAMAP" id="MF_00262">
    <property type="entry name" value="MinE"/>
    <property type="match status" value="1"/>
</dbReference>
<dbReference type="InterPro" id="IPR005527">
    <property type="entry name" value="MinE"/>
</dbReference>
<dbReference type="InterPro" id="IPR036707">
    <property type="entry name" value="MinE_sf"/>
</dbReference>
<dbReference type="NCBIfam" id="TIGR01215">
    <property type="entry name" value="minE"/>
    <property type="match status" value="1"/>
</dbReference>
<dbReference type="NCBIfam" id="NF001422">
    <property type="entry name" value="PRK00296.1"/>
    <property type="match status" value="1"/>
</dbReference>
<dbReference type="Pfam" id="PF03776">
    <property type="entry name" value="MinE"/>
    <property type="match status" value="1"/>
</dbReference>
<dbReference type="SUPFAM" id="SSF55229">
    <property type="entry name" value="Cell division protein MinE topological specificity domain"/>
    <property type="match status" value="1"/>
</dbReference>
<keyword id="KW-0131">Cell cycle</keyword>
<keyword id="KW-0132">Cell division</keyword>
<gene>
    <name evidence="1" type="primary">minE</name>
    <name type="ordered locus">Shewmr7_2252</name>
</gene>
<accession>Q0HUG5</accession>